<name>LPXB_NEIMA</name>
<accession>Q9JX45</accession>
<accession>A1INT1</accession>
<feature type="chain" id="PRO_0000190171" description="Lipid-A-disaccharide synthase">
    <location>
        <begin position="1"/>
        <end position="384"/>
    </location>
</feature>
<dbReference type="EC" id="2.4.1.182"/>
<dbReference type="EMBL" id="AL157959">
    <property type="protein sequence ID" value="CAM07388.1"/>
    <property type="molecule type" value="Genomic_DNA"/>
</dbReference>
<dbReference type="PIR" id="D81998">
    <property type="entry name" value="D81998"/>
</dbReference>
<dbReference type="SMR" id="Q9JX45"/>
<dbReference type="CAZy" id="GT19">
    <property type="family name" value="Glycosyltransferase Family 19"/>
</dbReference>
<dbReference type="EnsemblBacteria" id="CAM07388">
    <property type="protein sequence ID" value="CAM07388"/>
    <property type="gene ID" value="NMA0069"/>
</dbReference>
<dbReference type="KEGG" id="nma:NMA0069"/>
<dbReference type="HOGENOM" id="CLU_036577_3_0_4"/>
<dbReference type="UniPathway" id="UPA00973"/>
<dbReference type="Proteomes" id="UP000000626">
    <property type="component" value="Chromosome"/>
</dbReference>
<dbReference type="GO" id="GO:0016020">
    <property type="term" value="C:membrane"/>
    <property type="evidence" value="ECO:0007669"/>
    <property type="project" value="GOC"/>
</dbReference>
<dbReference type="GO" id="GO:0008915">
    <property type="term" value="F:lipid-A-disaccharide synthase activity"/>
    <property type="evidence" value="ECO:0007669"/>
    <property type="project" value="UniProtKB-UniRule"/>
</dbReference>
<dbReference type="GO" id="GO:0005543">
    <property type="term" value="F:phospholipid binding"/>
    <property type="evidence" value="ECO:0007669"/>
    <property type="project" value="TreeGrafter"/>
</dbReference>
<dbReference type="GO" id="GO:0009245">
    <property type="term" value="P:lipid A biosynthetic process"/>
    <property type="evidence" value="ECO:0007669"/>
    <property type="project" value="UniProtKB-UniRule"/>
</dbReference>
<dbReference type="HAMAP" id="MF_00392">
    <property type="entry name" value="LpxB"/>
    <property type="match status" value="1"/>
</dbReference>
<dbReference type="InterPro" id="IPR003835">
    <property type="entry name" value="Glyco_trans_19"/>
</dbReference>
<dbReference type="NCBIfam" id="TIGR00215">
    <property type="entry name" value="lpxB"/>
    <property type="match status" value="1"/>
</dbReference>
<dbReference type="PANTHER" id="PTHR30372">
    <property type="entry name" value="LIPID-A-DISACCHARIDE SYNTHASE"/>
    <property type="match status" value="1"/>
</dbReference>
<dbReference type="PANTHER" id="PTHR30372:SF4">
    <property type="entry name" value="LIPID-A-DISACCHARIDE SYNTHASE, MITOCHONDRIAL-RELATED"/>
    <property type="match status" value="1"/>
</dbReference>
<dbReference type="Pfam" id="PF02684">
    <property type="entry name" value="LpxB"/>
    <property type="match status" value="1"/>
</dbReference>
<dbReference type="SUPFAM" id="SSF53756">
    <property type="entry name" value="UDP-Glycosyltransferase/glycogen phosphorylase"/>
    <property type="match status" value="1"/>
</dbReference>
<gene>
    <name type="primary">lpxB</name>
    <name type="ordered locus">NMA0069</name>
</gene>
<proteinExistence type="inferred from homology"/>
<sequence length="384" mass="42472">MADKKSPLIAVSVGEASGDLLGAHLIRAIRKRCPQARFVGIGGELMKAEGFESLYDQERLAVRGFVEVVRRLPEILRIRRGLVRDLLSLKPDVFVGIDAPDFNLGVAERLKRSGIPTVHYVSPSVWAWRRERVGKIVHQVNRVLCLFPMEPQLYLDAGGRAEFVGHPMAQLMPLEDDRETARKTLGVDAGIPVFALLPGSRVSEIDYMAPVFFQTALLLLKRYPAARFLLPAATEATKRRLAEILQRSEFAGLPLTVTDRQSETVCRAADAVLVTSGTATLEVALCKRPMVISYKISPLTYAYVKRKIKVPHVGLPNILLGKEAVPELLQHDAVPEKLAAALADWYEHPDKVAALQQDFRVLHLLLKKDTADLAARAVLEEAGC</sequence>
<comment type="function">
    <text evidence="1">Condensation of UDP-2,3-diacylglucosamine and 2,3-diacylglucosamine-1-phosphate to form lipid A disaccharide, a precursor of lipid A, a phosphorylated glycolipid that anchors the lipopolysaccharide to the outer membrane of the cell.</text>
</comment>
<comment type="catalytic activity">
    <reaction>
        <text>a lipid X + a UDP-2-N,3-O-bis[(3R)-3-hydroxyacyl]-alpha-D-glucosamine = a lipid A disaccharide + UDP + H(+)</text>
        <dbReference type="Rhea" id="RHEA:67828"/>
        <dbReference type="ChEBI" id="CHEBI:15378"/>
        <dbReference type="ChEBI" id="CHEBI:58223"/>
        <dbReference type="ChEBI" id="CHEBI:137748"/>
        <dbReference type="ChEBI" id="CHEBI:176338"/>
        <dbReference type="ChEBI" id="CHEBI:176343"/>
        <dbReference type="EC" id="2.4.1.182"/>
    </reaction>
</comment>
<comment type="pathway">
    <text>Bacterial outer membrane biogenesis; LPS lipid A biosynthesis.</text>
</comment>
<comment type="similarity">
    <text evidence="2">Belongs to the LpxB family.</text>
</comment>
<protein>
    <recommendedName>
        <fullName>Lipid-A-disaccharide synthase</fullName>
        <ecNumber>2.4.1.182</ecNumber>
    </recommendedName>
</protein>
<reference key="1">
    <citation type="journal article" date="2000" name="Nature">
        <title>Complete DNA sequence of a serogroup A strain of Neisseria meningitidis Z2491.</title>
        <authorList>
            <person name="Parkhill J."/>
            <person name="Achtman M."/>
            <person name="James K.D."/>
            <person name="Bentley S.D."/>
            <person name="Churcher C.M."/>
            <person name="Klee S.R."/>
            <person name="Morelli G."/>
            <person name="Basham D."/>
            <person name="Brown D."/>
            <person name="Chillingworth T."/>
            <person name="Davies R.M."/>
            <person name="Davis P."/>
            <person name="Devlin K."/>
            <person name="Feltwell T."/>
            <person name="Hamlin N."/>
            <person name="Holroyd S."/>
            <person name="Jagels K."/>
            <person name="Leather S."/>
            <person name="Moule S."/>
            <person name="Mungall K.L."/>
            <person name="Quail M.A."/>
            <person name="Rajandream M.A."/>
            <person name="Rutherford K.M."/>
            <person name="Simmonds M."/>
            <person name="Skelton J."/>
            <person name="Whitehead S."/>
            <person name="Spratt B.G."/>
            <person name="Barrell B.G."/>
        </authorList>
    </citation>
    <scope>NUCLEOTIDE SEQUENCE [LARGE SCALE GENOMIC DNA]</scope>
    <source>
        <strain>DSM 15465 / Z2491</strain>
    </source>
</reference>
<organism>
    <name type="scientific">Neisseria meningitidis serogroup A / serotype 4A (strain DSM 15465 / Z2491)</name>
    <dbReference type="NCBI Taxonomy" id="122587"/>
    <lineage>
        <taxon>Bacteria</taxon>
        <taxon>Pseudomonadati</taxon>
        <taxon>Pseudomonadota</taxon>
        <taxon>Betaproteobacteria</taxon>
        <taxon>Neisseriales</taxon>
        <taxon>Neisseriaceae</taxon>
        <taxon>Neisseria</taxon>
    </lineage>
</organism>
<keyword id="KW-0328">Glycosyltransferase</keyword>
<keyword id="KW-0441">Lipid A biosynthesis</keyword>
<keyword id="KW-0444">Lipid biosynthesis</keyword>
<keyword id="KW-0443">Lipid metabolism</keyword>
<keyword id="KW-0808">Transferase</keyword>
<evidence type="ECO:0000250" key="1"/>
<evidence type="ECO:0000305" key="2"/>